<protein>
    <recommendedName>
        <fullName evidence="1">Glycerol-3-phosphate dehydrogenase [NAD(P)+]</fullName>
        <ecNumber evidence="1">1.1.1.94</ecNumber>
    </recommendedName>
    <alternativeName>
        <fullName evidence="1">NAD(P)(+)-dependent glycerol-3-phosphate dehydrogenase</fullName>
    </alternativeName>
    <alternativeName>
        <fullName evidence="1">NAD(P)H-dependent dihydroxyacetone-phosphate reductase</fullName>
    </alternativeName>
</protein>
<accession>Q03AM6</accession>
<sequence>MPTKIAVLGAGSWGTVLANLLTENGHEVDLWSHNPDQVALMKRTHQNEHYLGAEFTLQPALHVTADLGQALDQAAVILFVVPTNAIRSVAEQVKPILQAHKGRGEQPIIVHAAKGLERGSELRISQVLAEVLPKELIQGIVVISGPSHAEDVATHDITTLTAASDDLKLAEKVQKLFMNDYFRLYTNTDVIGVEIGAALKNVIAIGAGALHGLGYGDNTKAALMTRGLAEISRVGVKLGAEPLTFIGLSGVGDLIVTCTSVHSRNWRAGNALGKGEKLPDVLKNMGMVVEGVSTTKVAHQMARELDVDMPITDAIYQVLYENAPIRTVITDLMKRSGKPEFDFDNASLQKP</sequence>
<proteinExistence type="inferred from homology"/>
<comment type="function">
    <text evidence="1">Catalyzes the reduction of the glycolytic intermediate dihydroxyacetone phosphate (DHAP) to sn-glycerol 3-phosphate (G3P), the key precursor for phospholipid synthesis.</text>
</comment>
<comment type="catalytic activity">
    <reaction evidence="1">
        <text>sn-glycerol 3-phosphate + NAD(+) = dihydroxyacetone phosphate + NADH + H(+)</text>
        <dbReference type="Rhea" id="RHEA:11092"/>
        <dbReference type="ChEBI" id="CHEBI:15378"/>
        <dbReference type="ChEBI" id="CHEBI:57540"/>
        <dbReference type="ChEBI" id="CHEBI:57597"/>
        <dbReference type="ChEBI" id="CHEBI:57642"/>
        <dbReference type="ChEBI" id="CHEBI:57945"/>
        <dbReference type="EC" id="1.1.1.94"/>
    </reaction>
    <physiologicalReaction direction="right-to-left" evidence="1">
        <dbReference type="Rhea" id="RHEA:11094"/>
    </physiologicalReaction>
</comment>
<comment type="catalytic activity">
    <reaction evidence="1">
        <text>sn-glycerol 3-phosphate + NADP(+) = dihydroxyacetone phosphate + NADPH + H(+)</text>
        <dbReference type="Rhea" id="RHEA:11096"/>
        <dbReference type="ChEBI" id="CHEBI:15378"/>
        <dbReference type="ChEBI" id="CHEBI:57597"/>
        <dbReference type="ChEBI" id="CHEBI:57642"/>
        <dbReference type="ChEBI" id="CHEBI:57783"/>
        <dbReference type="ChEBI" id="CHEBI:58349"/>
        <dbReference type="EC" id="1.1.1.94"/>
    </reaction>
    <physiologicalReaction direction="right-to-left" evidence="1">
        <dbReference type="Rhea" id="RHEA:11098"/>
    </physiologicalReaction>
</comment>
<comment type="pathway">
    <text evidence="1">Membrane lipid metabolism; glycerophospholipid metabolism.</text>
</comment>
<comment type="subcellular location">
    <subcellularLocation>
        <location evidence="1">Cytoplasm</location>
    </subcellularLocation>
</comment>
<comment type="similarity">
    <text evidence="1">Belongs to the NAD-dependent glycerol-3-phosphate dehydrogenase family.</text>
</comment>
<gene>
    <name evidence="1" type="primary">gpsA</name>
    <name type="ordered locus">LSEI_0947</name>
</gene>
<dbReference type="EC" id="1.1.1.94" evidence="1"/>
<dbReference type="EMBL" id="CP000423">
    <property type="protein sequence ID" value="ABJ69746.1"/>
    <property type="molecule type" value="Genomic_DNA"/>
</dbReference>
<dbReference type="RefSeq" id="WP_011674327.1">
    <property type="nucleotide sequence ID" value="NC_008526.1"/>
</dbReference>
<dbReference type="RefSeq" id="YP_806188.1">
    <property type="nucleotide sequence ID" value="NC_008526.1"/>
</dbReference>
<dbReference type="SMR" id="Q03AM6"/>
<dbReference type="STRING" id="321967.LSEI_0947"/>
<dbReference type="PaxDb" id="321967-LSEI_0947"/>
<dbReference type="KEGG" id="lca:LSEI_0947"/>
<dbReference type="PATRIC" id="fig|321967.11.peg.918"/>
<dbReference type="HOGENOM" id="CLU_033449_0_2_9"/>
<dbReference type="UniPathway" id="UPA00940"/>
<dbReference type="Proteomes" id="UP000001651">
    <property type="component" value="Chromosome"/>
</dbReference>
<dbReference type="GO" id="GO:0005829">
    <property type="term" value="C:cytosol"/>
    <property type="evidence" value="ECO:0007669"/>
    <property type="project" value="TreeGrafter"/>
</dbReference>
<dbReference type="GO" id="GO:0047952">
    <property type="term" value="F:glycerol-3-phosphate dehydrogenase [NAD(P)+] activity"/>
    <property type="evidence" value="ECO:0007669"/>
    <property type="project" value="UniProtKB-UniRule"/>
</dbReference>
<dbReference type="GO" id="GO:0051287">
    <property type="term" value="F:NAD binding"/>
    <property type="evidence" value="ECO:0007669"/>
    <property type="project" value="InterPro"/>
</dbReference>
<dbReference type="GO" id="GO:0005975">
    <property type="term" value="P:carbohydrate metabolic process"/>
    <property type="evidence" value="ECO:0007669"/>
    <property type="project" value="InterPro"/>
</dbReference>
<dbReference type="GO" id="GO:0046167">
    <property type="term" value="P:glycerol-3-phosphate biosynthetic process"/>
    <property type="evidence" value="ECO:0007669"/>
    <property type="project" value="UniProtKB-UniRule"/>
</dbReference>
<dbReference type="GO" id="GO:0046168">
    <property type="term" value="P:glycerol-3-phosphate catabolic process"/>
    <property type="evidence" value="ECO:0007669"/>
    <property type="project" value="InterPro"/>
</dbReference>
<dbReference type="GO" id="GO:0006650">
    <property type="term" value="P:glycerophospholipid metabolic process"/>
    <property type="evidence" value="ECO:0007669"/>
    <property type="project" value="UniProtKB-UniRule"/>
</dbReference>
<dbReference type="GO" id="GO:0008654">
    <property type="term" value="P:phospholipid biosynthetic process"/>
    <property type="evidence" value="ECO:0007669"/>
    <property type="project" value="UniProtKB-KW"/>
</dbReference>
<dbReference type="FunFam" id="1.10.1040.10:FF:000001">
    <property type="entry name" value="Glycerol-3-phosphate dehydrogenase [NAD(P)+]"/>
    <property type="match status" value="1"/>
</dbReference>
<dbReference type="FunFam" id="3.40.50.720:FF:000019">
    <property type="entry name" value="Glycerol-3-phosphate dehydrogenase [NAD(P)+]"/>
    <property type="match status" value="1"/>
</dbReference>
<dbReference type="Gene3D" id="1.10.1040.10">
    <property type="entry name" value="N-(1-d-carboxylethyl)-l-norvaline Dehydrogenase, domain 2"/>
    <property type="match status" value="1"/>
</dbReference>
<dbReference type="Gene3D" id="3.40.50.720">
    <property type="entry name" value="NAD(P)-binding Rossmann-like Domain"/>
    <property type="match status" value="1"/>
</dbReference>
<dbReference type="HAMAP" id="MF_00394">
    <property type="entry name" value="NAD_Glyc3P_dehydrog"/>
    <property type="match status" value="1"/>
</dbReference>
<dbReference type="InterPro" id="IPR008927">
    <property type="entry name" value="6-PGluconate_DH-like_C_sf"/>
</dbReference>
<dbReference type="InterPro" id="IPR013328">
    <property type="entry name" value="6PGD_dom2"/>
</dbReference>
<dbReference type="InterPro" id="IPR006168">
    <property type="entry name" value="G3P_DH_NAD-dep"/>
</dbReference>
<dbReference type="InterPro" id="IPR006109">
    <property type="entry name" value="G3P_DH_NAD-dep_C"/>
</dbReference>
<dbReference type="InterPro" id="IPR011128">
    <property type="entry name" value="G3P_DH_NAD-dep_N"/>
</dbReference>
<dbReference type="InterPro" id="IPR036291">
    <property type="entry name" value="NAD(P)-bd_dom_sf"/>
</dbReference>
<dbReference type="NCBIfam" id="NF000940">
    <property type="entry name" value="PRK00094.1-2"/>
    <property type="match status" value="1"/>
</dbReference>
<dbReference type="NCBIfam" id="NF000941">
    <property type="entry name" value="PRK00094.1-3"/>
    <property type="match status" value="1"/>
</dbReference>
<dbReference type="NCBIfam" id="NF000942">
    <property type="entry name" value="PRK00094.1-4"/>
    <property type="match status" value="1"/>
</dbReference>
<dbReference type="PANTHER" id="PTHR11728">
    <property type="entry name" value="GLYCEROL-3-PHOSPHATE DEHYDROGENASE"/>
    <property type="match status" value="1"/>
</dbReference>
<dbReference type="PANTHER" id="PTHR11728:SF1">
    <property type="entry name" value="GLYCEROL-3-PHOSPHATE DEHYDROGENASE [NAD(+)] 2, CHLOROPLASTIC"/>
    <property type="match status" value="1"/>
</dbReference>
<dbReference type="Pfam" id="PF07479">
    <property type="entry name" value="NAD_Gly3P_dh_C"/>
    <property type="match status" value="1"/>
</dbReference>
<dbReference type="Pfam" id="PF01210">
    <property type="entry name" value="NAD_Gly3P_dh_N"/>
    <property type="match status" value="1"/>
</dbReference>
<dbReference type="PIRSF" id="PIRSF000114">
    <property type="entry name" value="Glycerol-3-P_dh"/>
    <property type="match status" value="1"/>
</dbReference>
<dbReference type="PRINTS" id="PR00077">
    <property type="entry name" value="GPDHDRGNASE"/>
</dbReference>
<dbReference type="SUPFAM" id="SSF48179">
    <property type="entry name" value="6-phosphogluconate dehydrogenase C-terminal domain-like"/>
    <property type="match status" value="1"/>
</dbReference>
<dbReference type="SUPFAM" id="SSF51735">
    <property type="entry name" value="NAD(P)-binding Rossmann-fold domains"/>
    <property type="match status" value="1"/>
</dbReference>
<dbReference type="PROSITE" id="PS00957">
    <property type="entry name" value="NAD_G3PDH"/>
    <property type="match status" value="1"/>
</dbReference>
<feature type="chain" id="PRO_1000049517" description="Glycerol-3-phosphate dehydrogenase [NAD(P)+]">
    <location>
        <begin position="1"/>
        <end position="351"/>
    </location>
</feature>
<feature type="active site" description="Proton acceptor" evidence="1">
    <location>
        <position position="200"/>
    </location>
</feature>
<feature type="binding site" evidence="1">
    <location>
        <position position="12"/>
    </location>
    <ligand>
        <name>NADPH</name>
        <dbReference type="ChEBI" id="CHEBI:57783"/>
    </ligand>
</feature>
<feature type="binding site" evidence="1">
    <location>
        <position position="13"/>
    </location>
    <ligand>
        <name>NADPH</name>
        <dbReference type="ChEBI" id="CHEBI:57783"/>
    </ligand>
</feature>
<feature type="binding site" evidence="1">
    <location>
        <position position="33"/>
    </location>
    <ligand>
        <name>NADPH</name>
        <dbReference type="ChEBI" id="CHEBI:57783"/>
    </ligand>
</feature>
<feature type="binding site" evidence="1">
    <location>
        <position position="114"/>
    </location>
    <ligand>
        <name>NADPH</name>
        <dbReference type="ChEBI" id="CHEBI:57783"/>
    </ligand>
</feature>
<feature type="binding site" evidence="1">
    <location>
        <position position="114"/>
    </location>
    <ligand>
        <name>sn-glycerol 3-phosphate</name>
        <dbReference type="ChEBI" id="CHEBI:57597"/>
    </ligand>
</feature>
<feature type="binding site" evidence="1">
    <location>
        <position position="145"/>
    </location>
    <ligand>
        <name>sn-glycerol 3-phosphate</name>
        <dbReference type="ChEBI" id="CHEBI:57597"/>
    </ligand>
</feature>
<feature type="binding site" evidence="1">
    <location>
        <position position="147"/>
    </location>
    <ligand>
        <name>sn-glycerol 3-phosphate</name>
        <dbReference type="ChEBI" id="CHEBI:57597"/>
    </ligand>
</feature>
<feature type="binding site" evidence="1">
    <location>
        <position position="149"/>
    </location>
    <ligand>
        <name>NADPH</name>
        <dbReference type="ChEBI" id="CHEBI:57783"/>
    </ligand>
</feature>
<feature type="binding site" evidence="1">
    <location>
        <position position="200"/>
    </location>
    <ligand>
        <name>sn-glycerol 3-phosphate</name>
        <dbReference type="ChEBI" id="CHEBI:57597"/>
    </ligand>
</feature>
<feature type="binding site" evidence="1">
    <location>
        <position position="253"/>
    </location>
    <ligand>
        <name>sn-glycerol 3-phosphate</name>
        <dbReference type="ChEBI" id="CHEBI:57597"/>
    </ligand>
</feature>
<feature type="binding site" evidence="1">
    <location>
        <position position="263"/>
    </location>
    <ligand>
        <name>sn-glycerol 3-phosphate</name>
        <dbReference type="ChEBI" id="CHEBI:57597"/>
    </ligand>
</feature>
<feature type="binding site" evidence="1">
    <location>
        <position position="264"/>
    </location>
    <ligand>
        <name>NADPH</name>
        <dbReference type="ChEBI" id="CHEBI:57783"/>
    </ligand>
</feature>
<feature type="binding site" evidence="1">
    <location>
        <position position="264"/>
    </location>
    <ligand>
        <name>sn-glycerol 3-phosphate</name>
        <dbReference type="ChEBI" id="CHEBI:57597"/>
    </ligand>
</feature>
<feature type="binding site" evidence="1">
    <location>
        <position position="265"/>
    </location>
    <ligand>
        <name>sn-glycerol 3-phosphate</name>
        <dbReference type="ChEBI" id="CHEBI:57597"/>
    </ligand>
</feature>
<feature type="binding site" evidence="1">
    <location>
        <position position="288"/>
    </location>
    <ligand>
        <name>NADPH</name>
        <dbReference type="ChEBI" id="CHEBI:57783"/>
    </ligand>
</feature>
<feature type="binding site" evidence="1">
    <location>
        <position position="290"/>
    </location>
    <ligand>
        <name>NADPH</name>
        <dbReference type="ChEBI" id="CHEBI:57783"/>
    </ligand>
</feature>
<organism>
    <name type="scientific">Lacticaseibacillus paracasei (strain ATCC 334 / BCRC 17002 / CCUG 31169 / CIP 107868 / KCTC 3260 / NRRL B-441)</name>
    <name type="common">Lactobacillus paracasei</name>
    <dbReference type="NCBI Taxonomy" id="321967"/>
    <lineage>
        <taxon>Bacteria</taxon>
        <taxon>Bacillati</taxon>
        <taxon>Bacillota</taxon>
        <taxon>Bacilli</taxon>
        <taxon>Lactobacillales</taxon>
        <taxon>Lactobacillaceae</taxon>
        <taxon>Lacticaseibacillus</taxon>
    </lineage>
</organism>
<reference key="1">
    <citation type="journal article" date="2006" name="Proc. Natl. Acad. Sci. U.S.A.">
        <title>Comparative genomics of the lactic acid bacteria.</title>
        <authorList>
            <person name="Makarova K.S."/>
            <person name="Slesarev A."/>
            <person name="Wolf Y.I."/>
            <person name="Sorokin A."/>
            <person name="Mirkin B."/>
            <person name="Koonin E.V."/>
            <person name="Pavlov A."/>
            <person name="Pavlova N."/>
            <person name="Karamychev V."/>
            <person name="Polouchine N."/>
            <person name="Shakhova V."/>
            <person name="Grigoriev I."/>
            <person name="Lou Y."/>
            <person name="Rohksar D."/>
            <person name="Lucas S."/>
            <person name="Huang K."/>
            <person name="Goodstein D.M."/>
            <person name="Hawkins T."/>
            <person name="Plengvidhya V."/>
            <person name="Welker D."/>
            <person name="Hughes J."/>
            <person name="Goh Y."/>
            <person name="Benson A."/>
            <person name="Baldwin K."/>
            <person name="Lee J.-H."/>
            <person name="Diaz-Muniz I."/>
            <person name="Dosti B."/>
            <person name="Smeianov V."/>
            <person name="Wechter W."/>
            <person name="Barabote R."/>
            <person name="Lorca G."/>
            <person name="Altermann E."/>
            <person name="Barrangou R."/>
            <person name="Ganesan B."/>
            <person name="Xie Y."/>
            <person name="Rawsthorne H."/>
            <person name="Tamir D."/>
            <person name="Parker C."/>
            <person name="Breidt F."/>
            <person name="Broadbent J.R."/>
            <person name="Hutkins R."/>
            <person name="O'Sullivan D."/>
            <person name="Steele J."/>
            <person name="Unlu G."/>
            <person name="Saier M.H. Jr."/>
            <person name="Klaenhammer T."/>
            <person name="Richardson P."/>
            <person name="Kozyavkin S."/>
            <person name="Weimer B.C."/>
            <person name="Mills D.A."/>
        </authorList>
    </citation>
    <scope>NUCLEOTIDE SEQUENCE [LARGE SCALE GENOMIC DNA]</scope>
    <source>
        <strain>ATCC 334 / BCRC 17002 / CCUG 31169 / CIP 107868 / KCTC 3260 / NRRL B-441</strain>
    </source>
</reference>
<evidence type="ECO:0000255" key="1">
    <source>
        <dbReference type="HAMAP-Rule" id="MF_00394"/>
    </source>
</evidence>
<keyword id="KW-0963">Cytoplasm</keyword>
<keyword id="KW-0444">Lipid biosynthesis</keyword>
<keyword id="KW-0443">Lipid metabolism</keyword>
<keyword id="KW-0520">NAD</keyword>
<keyword id="KW-0521">NADP</keyword>
<keyword id="KW-0547">Nucleotide-binding</keyword>
<keyword id="KW-0560">Oxidoreductase</keyword>
<keyword id="KW-0594">Phospholipid biosynthesis</keyword>
<keyword id="KW-1208">Phospholipid metabolism</keyword>
<keyword id="KW-1185">Reference proteome</keyword>
<name>GPDA_LACP3</name>